<name>RL34_BACLD</name>
<gene>
    <name evidence="1" type="primary">rpmH</name>
    <name type="ordered locus">BLi04379</name>
    <name type="ordered locus">BL05398</name>
</gene>
<sequence length="44" mass="5253">MKRTFQPNNRKRSKVHGFRSRMSSKNGRLVLARRRRKGRKVLSA</sequence>
<accession>Q65CM7</accession>
<accession>Q62N56</accession>
<reference key="1">
    <citation type="journal article" date="2004" name="J. Mol. Microbiol. Biotechnol.">
        <title>The complete genome sequence of Bacillus licheniformis DSM13, an organism with great industrial potential.</title>
        <authorList>
            <person name="Veith B."/>
            <person name="Herzberg C."/>
            <person name="Steckel S."/>
            <person name="Feesche J."/>
            <person name="Maurer K.H."/>
            <person name="Ehrenreich P."/>
            <person name="Baeumer S."/>
            <person name="Henne A."/>
            <person name="Liesegang H."/>
            <person name="Merkl R."/>
            <person name="Ehrenreich A."/>
            <person name="Gottschalk G."/>
        </authorList>
    </citation>
    <scope>NUCLEOTIDE SEQUENCE [LARGE SCALE GENOMIC DNA]</scope>
    <source>
        <strain>ATCC 14580 / DSM 13 / JCM 2505 / CCUG 7422 / NBRC 12200 / NCIMB 9375 / NCTC 10341 / NRRL NRS-1264 / Gibson 46</strain>
    </source>
</reference>
<reference key="2">
    <citation type="journal article" date="2004" name="Genome Biol.">
        <title>Complete genome sequence of the industrial bacterium Bacillus licheniformis and comparisons with closely related Bacillus species.</title>
        <authorList>
            <person name="Rey M.W."/>
            <person name="Ramaiya P."/>
            <person name="Nelson B.A."/>
            <person name="Brody-Karpin S.D."/>
            <person name="Zaretsky E.J."/>
            <person name="Tang M."/>
            <person name="Lopez de Leon A."/>
            <person name="Xiang H."/>
            <person name="Gusti V."/>
            <person name="Clausen I.G."/>
            <person name="Olsen P.B."/>
            <person name="Rasmussen M.D."/>
            <person name="Andersen J.T."/>
            <person name="Joergensen P.L."/>
            <person name="Larsen T.S."/>
            <person name="Sorokin A."/>
            <person name="Bolotin A."/>
            <person name="Lapidus A."/>
            <person name="Galleron N."/>
            <person name="Ehrlich S.D."/>
            <person name="Berka R.M."/>
        </authorList>
    </citation>
    <scope>NUCLEOTIDE SEQUENCE [LARGE SCALE GENOMIC DNA]</scope>
    <source>
        <strain>ATCC 14580 / DSM 13 / JCM 2505 / CCUG 7422 / NBRC 12200 / NCIMB 9375 / NCTC 10341 / NRRL NRS-1264 / Gibson 46</strain>
    </source>
</reference>
<comment type="similarity">
    <text evidence="1">Belongs to the bacterial ribosomal protein bL34 family.</text>
</comment>
<dbReference type="EMBL" id="AE017333">
    <property type="protein sequence ID" value="AAU43187.1"/>
    <property type="molecule type" value="Genomic_DNA"/>
</dbReference>
<dbReference type="EMBL" id="CP000002">
    <property type="protein sequence ID" value="AAU25805.1"/>
    <property type="molecule type" value="Genomic_DNA"/>
</dbReference>
<dbReference type="RefSeq" id="WP_003178075.1">
    <property type="nucleotide sequence ID" value="NC_006322.1"/>
</dbReference>
<dbReference type="SMR" id="Q65CM7"/>
<dbReference type="STRING" id="279010.BL05398"/>
<dbReference type="GeneID" id="93082950"/>
<dbReference type="KEGG" id="bld:BLi04379"/>
<dbReference type="KEGG" id="bli:BL05398"/>
<dbReference type="eggNOG" id="COG0230">
    <property type="taxonomic scope" value="Bacteria"/>
</dbReference>
<dbReference type="HOGENOM" id="CLU_129938_2_0_9"/>
<dbReference type="Proteomes" id="UP000000606">
    <property type="component" value="Chromosome"/>
</dbReference>
<dbReference type="GO" id="GO:1990904">
    <property type="term" value="C:ribonucleoprotein complex"/>
    <property type="evidence" value="ECO:0007669"/>
    <property type="project" value="UniProtKB-KW"/>
</dbReference>
<dbReference type="GO" id="GO:0005840">
    <property type="term" value="C:ribosome"/>
    <property type="evidence" value="ECO:0007669"/>
    <property type="project" value="UniProtKB-KW"/>
</dbReference>
<dbReference type="GO" id="GO:0003735">
    <property type="term" value="F:structural constituent of ribosome"/>
    <property type="evidence" value="ECO:0007669"/>
    <property type="project" value="InterPro"/>
</dbReference>
<dbReference type="GO" id="GO:0006412">
    <property type="term" value="P:translation"/>
    <property type="evidence" value="ECO:0007669"/>
    <property type="project" value="UniProtKB-UniRule"/>
</dbReference>
<dbReference type="FunFam" id="1.10.287.3980:FF:000001">
    <property type="entry name" value="Mitochondrial ribosomal protein L34"/>
    <property type="match status" value="1"/>
</dbReference>
<dbReference type="Gene3D" id="1.10.287.3980">
    <property type="match status" value="1"/>
</dbReference>
<dbReference type="HAMAP" id="MF_00391">
    <property type="entry name" value="Ribosomal_bL34"/>
    <property type="match status" value="1"/>
</dbReference>
<dbReference type="InterPro" id="IPR000271">
    <property type="entry name" value="Ribosomal_bL34"/>
</dbReference>
<dbReference type="InterPro" id="IPR020939">
    <property type="entry name" value="Ribosomal_bL34_CS"/>
</dbReference>
<dbReference type="NCBIfam" id="TIGR01030">
    <property type="entry name" value="rpmH_bact"/>
    <property type="match status" value="1"/>
</dbReference>
<dbReference type="PANTHER" id="PTHR14503:SF4">
    <property type="entry name" value="LARGE RIBOSOMAL SUBUNIT PROTEIN BL34M"/>
    <property type="match status" value="1"/>
</dbReference>
<dbReference type="PANTHER" id="PTHR14503">
    <property type="entry name" value="MITOCHONDRIAL RIBOSOMAL PROTEIN 34 FAMILY MEMBER"/>
    <property type="match status" value="1"/>
</dbReference>
<dbReference type="Pfam" id="PF00468">
    <property type="entry name" value="Ribosomal_L34"/>
    <property type="match status" value="1"/>
</dbReference>
<dbReference type="PROSITE" id="PS00784">
    <property type="entry name" value="RIBOSOMAL_L34"/>
    <property type="match status" value="1"/>
</dbReference>
<proteinExistence type="inferred from homology"/>
<feature type="chain" id="PRO_0000187338" description="Large ribosomal subunit protein bL34">
    <location>
        <begin position="1"/>
        <end position="44"/>
    </location>
</feature>
<feature type="region of interest" description="Disordered" evidence="2">
    <location>
        <begin position="1"/>
        <end position="27"/>
    </location>
</feature>
<feature type="compositionally biased region" description="Basic residues" evidence="2">
    <location>
        <begin position="1"/>
        <end position="19"/>
    </location>
</feature>
<protein>
    <recommendedName>
        <fullName evidence="1">Large ribosomal subunit protein bL34</fullName>
    </recommendedName>
    <alternativeName>
        <fullName evidence="3">50S ribosomal protein L34</fullName>
    </alternativeName>
</protein>
<keyword id="KW-1185">Reference proteome</keyword>
<keyword id="KW-0687">Ribonucleoprotein</keyword>
<keyword id="KW-0689">Ribosomal protein</keyword>
<evidence type="ECO:0000255" key="1">
    <source>
        <dbReference type="HAMAP-Rule" id="MF_00391"/>
    </source>
</evidence>
<evidence type="ECO:0000256" key="2">
    <source>
        <dbReference type="SAM" id="MobiDB-lite"/>
    </source>
</evidence>
<evidence type="ECO:0000305" key="3"/>
<organism>
    <name type="scientific">Bacillus licheniformis (strain ATCC 14580 / DSM 13 / JCM 2505 / CCUG 7422 / NBRC 12200 / NCIMB 9375 / NCTC 10341 / NRRL NRS-1264 / Gibson 46)</name>
    <dbReference type="NCBI Taxonomy" id="279010"/>
    <lineage>
        <taxon>Bacteria</taxon>
        <taxon>Bacillati</taxon>
        <taxon>Bacillota</taxon>
        <taxon>Bacilli</taxon>
        <taxon>Bacillales</taxon>
        <taxon>Bacillaceae</taxon>
        <taxon>Bacillus</taxon>
    </lineage>
</organism>